<organism>
    <name type="scientific">Danio rerio</name>
    <name type="common">Zebrafish</name>
    <name type="synonym">Brachydanio rerio</name>
    <dbReference type="NCBI Taxonomy" id="7955"/>
    <lineage>
        <taxon>Eukaryota</taxon>
        <taxon>Metazoa</taxon>
        <taxon>Chordata</taxon>
        <taxon>Craniata</taxon>
        <taxon>Vertebrata</taxon>
        <taxon>Euteleostomi</taxon>
        <taxon>Actinopterygii</taxon>
        <taxon>Neopterygii</taxon>
        <taxon>Teleostei</taxon>
        <taxon>Ostariophysi</taxon>
        <taxon>Cypriniformes</taxon>
        <taxon>Danionidae</taxon>
        <taxon>Danioninae</taxon>
        <taxon>Danio</taxon>
    </lineage>
</organism>
<evidence type="ECO:0000250" key="1">
    <source>
        <dbReference type="UniProtKB" id="A8K0Z3"/>
    </source>
</evidence>
<evidence type="ECO:0000250" key="2">
    <source>
        <dbReference type="UniProtKB" id="C4AMC7"/>
    </source>
</evidence>
<evidence type="ECO:0000250" key="3">
    <source>
        <dbReference type="UniProtKB" id="Q8VDD8"/>
    </source>
</evidence>
<evidence type="ECO:0000256" key="4">
    <source>
        <dbReference type="SAM" id="MobiDB-lite"/>
    </source>
</evidence>
<evidence type="ECO:0000305" key="5"/>
<reference key="1">
    <citation type="journal article" date="2013" name="Nature">
        <title>The zebrafish reference genome sequence and its relationship to the human genome.</title>
        <authorList>
            <person name="Howe K."/>
            <person name="Clark M.D."/>
            <person name="Torroja C.F."/>
            <person name="Torrance J."/>
            <person name="Berthelot C."/>
            <person name="Muffato M."/>
            <person name="Collins J.E."/>
            <person name="Humphray S."/>
            <person name="McLaren K."/>
            <person name="Matthews L."/>
            <person name="McLaren S."/>
            <person name="Sealy I."/>
            <person name="Caccamo M."/>
            <person name="Churcher C."/>
            <person name="Scott C."/>
            <person name="Barrett J.C."/>
            <person name="Koch R."/>
            <person name="Rauch G.J."/>
            <person name="White S."/>
            <person name="Chow W."/>
            <person name="Kilian B."/>
            <person name="Quintais L.T."/>
            <person name="Guerra-Assuncao J.A."/>
            <person name="Zhou Y."/>
            <person name="Gu Y."/>
            <person name="Yen J."/>
            <person name="Vogel J.H."/>
            <person name="Eyre T."/>
            <person name="Redmond S."/>
            <person name="Banerjee R."/>
            <person name="Chi J."/>
            <person name="Fu B."/>
            <person name="Langley E."/>
            <person name="Maguire S.F."/>
            <person name="Laird G.K."/>
            <person name="Lloyd D."/>
            <person name="Kenyon E."/>
            <person name="Donaldson S."/>
            <person name="Sehra H."/>
            <person name="Almeida-King J."/>
            <person name="Loveland J."/>
            <person name="Trevanion S."/>
            <person name="Jones M."/>
            <person name="Quail M."/>
            <person name="Willey D."/>
            <person name="Hunt A."/>
            <person name="Burton J."/>
            <person name="Sims S."/>
            <person name="McLay K."/>
            <person name="Plumb B."/>
            <person name="Davis J."/>
            <person name="Clee C."/>
            <person name="Oliver K."/>
            <person name="Clark R."/>
            <person name="Riddle C."/>
            <person name="Elliot D."/>
            <person name="Threadgold G."/>
            <person name="Harden G."/>
            <person name="Ware D."/>
            <person name="Begum S."/>
            <person name="Mortimore B."/>
            <person name="Kerry G."/>
            <person name="Heath P."/>
            <person name="Phillimore B."/>
            <person name="Tracey A."/>
            <person name="Corby N."/>
            <person name="Dunn M."/>
            <person name="Johnson C."/>
            <person name="Wood J."/>
            <person name="Clark S."/>
            <person name="Pelan S."/>
            <person name="Griffiths G."/>
            <person name="Smith M."/>
            <person name="Glithero R."/>
            <person name="Howden P."/>
            <person name="Barker N."/>
            <person name="Lloyd C."/>
            <person name="Stevens C."/>
            <person name="Harley J."/>
            <person name="Holt K."/>
            <person name="Panagiotidis G."/>
            <person name="Lovell J."/>
            <person name="Beasley H."/>
            <person name="Henderson C."/>
            <person name="Gordon D."/>
            <person name="Auger K."/>
            <person name="Wright D."/>
            <person name="Collins J."/>
            <person name="Raisen C."/>
            <person name="Dyer L."/>
            <person name="Leung K."/>
            <person name="Robertson L."/>
            <person name="Ambridge K."/>
            <person name="Leongamornlert D."/>
            <person name="McGuire S."/>
            <person name="Gilderthorp R."/>
            <person name="Griffiths C."/>
            <person name="Manthravadi D."/>
            <person name="Nichol S."/>
            <person name="Barker G."/>
            <person name="Whitehead S."/>
            <person name="Kay M."/>
            <person name="Brown J."/>
            <person name="Murnane C."/>
            <person name="Gray E."/>
            <person name="Humphries M."/>
            <person name="Sycamore N."/>
            <person name="Barker D."/>
            <person name="Saunders D."/>
            <person name="Wallis J."/>
            <person name="Babbage A."/>
            <person name="Hammond S."/>
            <person name="Mashreghi-Mohammadi M."/>
            <person name="Barr L."/>
            <person name="Martin S."/>
            <person name="Wray P."/>
            <person name="Ellington A."/>
            <person name="Matthews N."/>
            <person name="Ellwood M."/>
            <person name="Woodmansey R."/>
            <person name="Clark G."/>
            <person name="Cooper J."/>
            <person name="Tromans A."/>
            <person name="Grafham D."/>
            <person name="Skuce C."/>
            <person name="Pandian R."/>
            <person name="Andrews R."/>
            <person name="Harrison E."/>
            <person name="Kimberley A."/>
            <person name="Garnett J."/>
            <person name="Fosker N."/>
            <person name="Hall R."/>
            <person name="Garner P."/>
            <person name="Kelly D."/>
            <person name="Bird C."/>
            <person name="Palmer S."/>
            <person name="Gehring I."/>
            <person name="Berger A."/>
            <person name="Dooley C.M."/>
            <person name="Ersan-Urun Z."/>
            <person name="Eser C."/>
            <person name="Geiger H."/>
            <person name="Geisler M."/>
            <person name="Karotki L."/>
            <person name="Kirn A."/>
            <person name="Konantz J."/>
            <person name="Konantz M."/>
            <person name="Oberlander M."/>
            <person name="Rudolph-Geiger S."/>
            <person name="Teucke M."/>
            <person name="Lanz C."/>
            <person name="Raddatz G."/>
            <person name="Osoegawa K."/>
            <person name="Zhu B."/>
            <person name="Rapp A."/>
            <person name="Widaa S."/>
            <person name="Langford C."/>
            <person name="Yang F."/>
            <person name="Schuster S.C."/>
            <person name="Carter N.P."/>
            <person name="Harrow J."/>
            <person name="Ning Z."/>
            <person name="Herrero J."/>
            <person name="Searle S.M."/>
            <person name="Enright A."/>
            <person name="Geisler R."/>
            <person name="Plasterk R.H."/>
            <person name="Lee C."/>
            <person name="Westerfield M."/>
            <person name="de Jong P.J."/>
            <person name="Zon L.I."/>
            <person name="Postlethwait J.H."/>
            <person name="Nusslein-Volhard C."/>
            <person name="Hubbard T.J."/>
            <person name="Roest Crollius H."/>
            <person name="Rogers J."/>
            <person name="Stemple D.L."/>
        </authorList>
    </citation>
    <scope>NUCLEOTIDE SEQUENCE [LARGE SCALE GENOMIC DNA]</scope>
    <source>
        <strain>Tuebingen</strain>
    </source>
</reference>
<reference key="2">
    <citation type="submission" date="2007-03" db="EMBL/GenBank/DDBJ databases">
        <authorList>
            <consortium name="NIH - Zebrafish Gene Collection (ZGC) project"/>
        </authorList>
    </citation>
    <scope>NUCLEOTIDE SEQUENCE [LARGE SCALE MRNA]</scope>
    <source>
        <tissue>Ovary</tissue>
    </source>
</reference>
<name>WASH1_DANRE</name>
<proteinExistence type="evidence at transcript level"/>
<feature type="chain" id="PRO_0000390966" description="WASH complex subunit 1">
    <location>
        <begin position="1"/>
        <end position="481"/>
    </location>
</feature>
<feature type="domain" description="WH2">
    <location>
        <begin position="371"/>
        <end position="393"/>
    </location>
</feature>
<feature type="region of interest" description="Required for WASH complex assembly" evidence="2">
    <location>
        <begin position="1"/>
        <end position="54"/>
    </location>
</feature>
<feature type="region of interest" description="Disordered" evidence="4">
    <location>
        <begin position="273"/>
        <end position="417"/>
    </location>
</feature>
<feature type="region of interest" description="VCA" evidence="2">
    <location>
        <begin position="359"/>
        <end position="481"/>
    </location>
</feature>
<feature type="region of interest" description="Disordered" evidence="4">
    <location>
        <begin position="429"/>
        <end position="481"/>
    </location>
</feature>
<feature type="compositionally biased region" description="Pro residues" evidence="4">
    <location>
        <begin position="304"/>
        <end position="341"/>
    </location>
</feature>
<feature type="compositionally biased region" description="Basic and acidic residues" evidence="4">
    <location>
        <begin position="392"/>
        <end position="407"/>
    </location>
</feature>
<feature type="sequence conflict" description="In Ref. 2; AAI34942." evidence="5" ref="2">
    <original>M</original>
    <variation>I</variation>
    <location>
        <position position="341"/>
    </location>
</feature>
<feature type="sequence conflict" description="In Ref. 2; AAI34942." evidence="5" ref="2">
    <original>G</original>
    <variation>S</variation>
    <location>
        <position position="453"/>
    </location>
</feature>
<dbReference type="EMBL" id="AL928990">
    <property type="protein sequence ID" value="CAP09504.1"/>
    <property type="status" value="ALT_SEQ"/>
    <property type="molecule type" value="Genomic_DNA"/>
</dbReference>
<dbReference type="EMBL" id="BC134941">
    <property type="protein sequence ID" value="AAI34942.1"/>
    <property type="molecule type" value="mRNA"/>
</dbReference>
<dbReference type="RefSeq" id="NP_001103920.1">
    <property type="nucleotide sequence ID" value="NM_001110450.1"/>
</dbReference>
<dbReference type="SMR" id="A4IG59"/>
<dbReference type="FunCoup" id="A4IG59">
    <property type="interactions" value="936"/>
</dbReference>
<dbReference type="STRING" id="7955.ENSDARP00000087184"/>
<dbReference type="PaxDb" id="7955-ENSDARP00000087184"/>
<dbReference type="PeptideAtlas" id="A4IG59"/>
<dbReference type="Ensembl" id="ENSDART00000092752">
    <property type="protein sequence ID" value="ENSDARP00000087184"/>
    <property type="gene ID" value="ENSDARG00000063457"/>
</dbReference>
<dbReference type="GeneID" id="555174"/>
<dbReference type="KEGG" id="dre:555174"/>
<dbReference type="AGR" id="ZFIN:ZDB-GENE-050419-138"/>
<dbReference type="CTD" id="555174"/>
<dbReference type="ZFIN" id="ZDB-GENE-050419-138">
    <property type="gene designation" value="wash1"/>
</dbReference>
<dbReference type="eggNOG" id="ENOG502QSX3">
    <property type="taxonomic scope" value="Eukaryota"/>
</dbReference>
<dbReference type="InParanoid" id="A4IG59"/>
<dbReference type="OMA" id="SMDSPYE"/>
<dbReference type="OrthoDB" id="307871at2759"/>
<dbReference type="PhylomeDB" id="A4IG59"/>
<dbReference type="TreeFam" id="TF318222"/>
<dbReference type="PRO" id="PR:A4IG59"/>
<dbReference type="Proteomes" id="UP000000437">
    <property type="component" value="Chromosome 18"/>
</dbReference>
<dbReference type="Bgee" id="ENSDARG00000063457">
    <property type="expression patterns" value="Expressed in mature ovarian follicle and 20 other cell types or tissues"/>
</dbReference>
<dbReference type="ExpressionAtlas" id="A4IG59">
    <property type="expression patterns" value="baseline"/>
</dbReference>
<dbReference type="GO" id="GO:0005829">
    <property type="term" value="C:cytosol"/>
    <property type="evidence" value="ECO:0007669"/>
    <property type="project" value="GOC"/>
</dbReference>
<dbReference type="GO" id="GO:0005769">
    <property type="term" value="C:early endosome"/>
    <property type="evidence" value="ECO:0000250"/>
    <property type="project" value="UniProtKB"/>
</dbReference>
<dbReference type="GO" id="GO:0031901">
    <property type="term" value="C:early endosome membrane"/>
    <property type="evidence" value="ECO:0007669"/>
    <property type="project" value="UniProtKB-SubCell"/>
</dbReference>
<dbReference type="GO" id="GO:0055037">
    <property type="term" value="C:recycling endosome"/>
    <property type="evidence" value="ECO:0000250"/>
    <property type="project" value="UniProtKB"/>
</dbReference>
<dbReference type="GO" id="GO:0055038">
    <property type="term" value="C:recycling endosome membrane"/>
    <property type="evidence" value="ECO:0007669"/>
    <property type="project" value="UniProtKB-SubCell"/>
</dbReference>
<dbReference type="GO" id="GO:0071203">
    <property type="term" value="C:WASH complex"/>
    <property type="evidence" value="ECO:0000250"/>
    <property type="project" value="UniProtKB"/>
</dbReference>
<dbReference type="GO" id="GO:0003779">
    <property type="term" value="F:actin binding"/>
    <property type="evidence" value="ECO:0007669"/>
    <property type="project" value="UniProtKB-KW"/>
</dbReference>
<dbReference type="GO" id="GO:0043014">
    <property type="term" value="F:alpha-tubulin binding"/>
    <property type="evidence" value="ECO:0000250"/>
    <property type="project" value="UniProtKB"/>
</dbReference>
<dbReference type="GO" id="GO:0043015">
    <property type="term" value="F:gamma-tubulin binding"/>
    <property type="evidence" value="ECO:0000318"/>
    <property type="project" value="GO_Central"/>
</dbReference>
<dbReference type="GO" id="GO:0034314">
    <property type="term" value="P:Arp2/3 complex-mediated actin nucleation"/>
    <property type="evidence" value="ECO:0000250"/>
    <property type="project" value="UniProtKB"/>
</dbReference>
<dbReference type="GO" id="GO:0032456">
    <property type="term" value="P:endocytic recycling"/>
    <property type="evidence" value="ECO:0000318"/>
    <property type="project" value="GO_Central"/>
</dbReference>
<dbReference type="GO" id="GO:0016197">
    <property type="term" value="P:endosomal transport"/>
    <property type="evidence" value="ECO:0000250"/>
    <property type="project" value="UniProtKB"/>
</dbReference>
<dbReference type="GO" id="GO:0006887">
    <property type="term" value="P:exocytosis"/>
    <property type="evidence" value="ECO:0000318"/>
    <property type="project" value="GO_Central"/>
</dbReference>
<dbReference type="GO" id="GO:0015031">
    <property type="term" value="P:protein transport"/>
    <property type="evidence" value="ECO:0007669"/>
    <property type="project" value="UniProtKB-KW"/>
</dbReference>
<dbReference type="GO" id="GO:0042147">
    <property type="term" value="P:retrograde transport, endosome to Golgi"/>
    <property type="evidence" value="ECO:0000250"/>
    <property type="project" value="UniProtKB"/>
</dbReference>
<dbReference type="InterPro" id="IPR028290">
    <property type="entry name" value="WASH1"/>
</dbReference>
<dbReference type="InterPro" id="IPR021854">
    <property type="entry name" value="WASH1_WAHD"/>
</dbReference>
<dbReference type="PANTHER" id="PTHR23331">
    <property type="entry name" value="CXYORF1"/>
    <property type="match status" value="1"/>
</dbReference>
<dbReference type="PANTHER" id="PTHR23331:SF5">
    <property type="entry name" value="WAS PROTEIN FAMILY HOMOLOG 2-RELATED"/>
    <property type="match status" value="1"/>
</dbReference>
<dbReference type="Pfam" id="PF11945">
    <property type="entry name" value="WASH_WAHD"/>
    <property type="match status" value="1"/>
</dbReference>
<sequence length="481" mass="52112">MVRMTQKRYLEGQVYSVPLIQPDLRREEAVHQITDALQYLEMISTDIFTRVSESVEKNRAHLQSVTDRIKLAQARVQKIKGSKKATKVFSSAKYPAPEKLQDYSSIFTGAVDPASQKRPRIKVQSKLRPLDDKAQQEKLMYLPVCVNTKKRSEDETEEGLGSLPRNVNSVSSLLLFNTTENLYKKYVFLDPLAGAVTKTHTTLETEKEDKPFDAPLSITKREQLERQTAENYFYVPDLGQVPEIDVPSYLPDLPGIADDLMYSADLGPGFAPSVPASNSIPELPSFGTDHDESSGSDSQFKLEAPPPPPPPPPPPPEPTHVPVPPPGTSAAPPPPPPPPPMTADNTDASSPAPPTGTVKGAPSEVVQPSNGRASLLESIRNAGGIGKANLRNVKERKMEKKKQKEQEQVGATVSGGDLMSDLFNKLAMRRKGISGKGPAGQGDSSEAPASSGGAFARMSDVIPPLPAPQQSAADDEDDWEA</sequence>
<keyword id="KW-0009">Actin-binding</keyword>
<keyword id="KW-0967">Endosome</keyword>
<keyword id="KW-0472">Membrane</keyword>
<keyword id="KW-0653">Protein transport</keyword>
<keyword id="KW-1185">Reference proteome</keyword>
<keyword id="KW-0813">Transport</keyword>
<comment type="function">
    <text evidence="1 2">Acts as a nucleation-promoting factor at the surface of endosomes, where it recruits and activates the Arp2/3 complex to induce actin polymerization, playing a key role in the fission of tubules that serve as transport intermediates during endosome sorting.</text>
</comment>
<comment type="subunit">
    <text evidence="1 2">Component of the WASH complex.</text>
</comment>
<comment type="subcellular location">
    <subcellularLocation>
        <location evidence="1">Early endosome membrane</location>
    </subcellularLocation>
    <subcellularLocation>
        <location evidence="3">Recycling endosome membrane</location>
    </subcellularLocation>
</comment>
<comment type="domain">
    <text evidence="2">The VCA (verprolin, cofilin, acidic) domain promotes actin polymerization by the Arp2/3 complex in vitro.</text>
</comment>
<comment type="similarity">
    <text evidence="5">Belongs to the WASH1 family.</text>
</comment>
<comment type="sequence caution" evidence="5">
    <conflict type="erroneous gene model prediction">
        <sequence resource="EMBL-CDS" id="CAP09504"/>
    </conflict>
</comment>
<protein>
    <recommendedName>
        <fullName evidence="1">WASH complex subunit 1</fullName>
    </recommendedName>
    <alternativeName>
        <fullName>WAS protein family homolog 1</fullName>
    </alternativeName>
</protein>
<gene>
    <name evidence="1" type="primary">washc1</name>
    <name type="synonym">wash</name>
    <name type="synonym">Wash1</name>
    <name type="ORF">si:ch211-11f8.1</name>
</gene>
<accession>A4IG59</accession>
<accession>A8DZA2</accession>